<accession>Q7UWY8</accession>
<dbReference type="EC" id="3.6.1.9" evidence="1"/>
<dbReference type="EMBL" id="BX294135">
    <property type="protein sequence ID" value="CAD72224.1"/>
    <property type="status" value="ALT_INIT"/>
    <property type="molecule type" value="Genomic_DNA"/>
</dbReference>
<dbReference type="RefSeq" id="NP_864543.1">
    <property type="nucleotide sequence ID" value="NC_005027.1"/>
</dbReference>
<dbReference type="RefSeq" id="WP_164921444.1">
    <property type="nucleotide sequence ID" value="NC_005027.1"/>
</dbReference>
<dbReference type="SMR" id="Q7UWY8"/>
<dbReference type="FunCoup" id="Q7UWY8">
    <property type="interactions" value="309"/>
</dbReference>
<dbReference type="STRING" id="243090.RB1703"/>
<dbReference type="EnsemblBacteria" id="CAD72224">
    <property type="protein sequence ID" value="CAD72224"/>
    <property type="gene ID" value="RB1703"/>
</dbReference>
<dbReference type="KEGG" id="rba:RB1703"/>
<dbReference type="PATRIC" id="fig|243090.15.peg.789"/>
<dbReference type="eggNOG" id="COG0424">
    <property type="taxonomic scope" value="Bacteria"/>
</dbReference>
<dbReference type="HOGENOM" id="CLU_040416_2_0_0"/>
<dbReference type="InParanoid" id="Q7UWY8"/>
<dbReference type="OrthoDB" id="9807767at2"/>
<dbReference type="Proteomes" id="UP000001025">
    <property type="component" value="Chromosome"/>
</dbReference>
<dbReference type="GO" id="GO:0005737">
    <property type="term" value="C:cytoplasm"/>
    <property type="evidence" value="ECO:0007669"/>
    <property type="project" value="UniProtKB-SubCell"/>
</dbReference>
<dbReference type="GO" id="GO:0036218">
    <property type="term" value="F:dTTP diphosphatase activity"/>
    <property type="evidence" value="ECO:0007669"/>
    <property type="project" value="RHEA"/>
</dbReference>
<dbReference type="GO" id="GO:0047429">
    <property type="term" value="F:nucleoside triphosphate diphosphatase activity"/>
    <property type="evidence" value="ECO:0000318"/>
    <property type="project" value="GO_Central"/>
</dbReference>
<dbReference type="GO" id="GO:0036221">
    <property type="term" value="F:UTP diphosphatase activity"/>
    <property type="evidence" value="ECO:0007669"/>
    <property type="project" value="RHEA"/>
</dbReference>
<dbReference type="GO" id="GO:0009117">
    <property type="term" value="P:nucleotide metabolic process"/>
    <property type="evidence" value="ECO:0007669"/>
    <property type="project" value="UniProtKB-KW"/>
</dbReference>
<dbReference type="CDD" id="cd00555">
    <property type="entry name" value="Maf"/>
    <property type="match status" value="1"/>
</dbReference>
<dbReference type="Gene3D" id="3.90.950.10">
    <property type="match status" value="1"/>
</dbReference>
<dbReference type="HAMAP" id="MF_00528">
    <property type="entry name" value="Maf"/>
    <property type="match status" value="1"/>
</dbReference>
<dbReference type="InterPro" id="IPR029001">
    <property type="entry name" value="ITPase-like_fam"/>
</dbReference>
<dbReference type="InterPro" id="IPR003697">
    <property type="entry name" value="Maf-like"/>
</dbReference>
<dbReference type="NCBIfam" id="TIGR00172">
    <property type="entry name" value="maf"/>
    <property type="match status" value="1"/>
</dbReference>
<dbReference type="PANTHER" id="PTHR43213">
    <property type="entry name" value="BIFUNCTIONAL DTTP/UTP PYROPHOSPHATASE/METHYLTRANSFERASE PROTEIN-RELATED"/>
    <property type="match status" value="1"/>
</dbReference>
<dbReference type="PANTHER" id="PTHR43213:SF5">
    <property type="entry name" value="BIFUNCTIONAL DTTP_UTP PYROPHOSPHATASE_METHYLTRANSFERASE PROTEIN-RELATED"/>
    <property type="match status" value="1"/>
</dbReference>
<dbReference type="Pfam" id="PF02545">
    <property type="entry name" value="Maf"/>
    <property type="match status" value="1"/>
</dbReference>
<dbReference type="PIRSF" id="PIRSF006305">
    <property type="entry name" value="Maf"/>
    <property type="match status" value="1"/>
</dbReference>
<dbReference type="SUPFAM" id="SSF52972">
    <property type="entry name" value="ITPase-like"/>
    <property type="match status" value="1"/>
</dbReference>
<protein>
    <recommendedName>
        <fullName evidence="1">dTTP/UTP pyrophosphatase</fullName>
        <shortName evidence="1">dTTPase/UTPase</shortName>
        <ecNumber evidence="1">3.6.1.9</ecNumber>
    </recommendedName>
    <alternativeName>
        <fullName evidence="1">Nucleoside triphosphate pyrophosphatase</fullName>
    </alternativeName>
    <alternativeName>
        <fullName evidence="1">Nucleotide pyrophosphatase</fullName>
        <shortName evidence="1">Nucleotide PPase</shortName>
    </alternativeName>
</protein>
<evidence type="ECO:0000255" key="1">
    <source>
        <dbReference type="HAMAP-Rule" id="MF_00528"/>
    </source>
</evidence>
<evidence type="ECO:0000256" key="2">
    <source>
        <dbReference type="SAM" id="MobiDB-lite"/>
    </source>
</evidence>
<evidence type="ECO:0000305" key="3"/>
<proteinExistence type="inferred from homology"/>
<keyword id="KW-0963">Cytoplasm</keyword>
<keyword id="KW-0378">Hydrolase</keyword>
<keyword id="KW-0546">Nucleotide metabolism</keyword>
<keyword id="KW-1185">Reference proteome</keyword>
<reference key="1">
    <citation type="journal article" date="2003" name="Proc. Natl. Acad. Sci. U.S.A.">
        <title>Complete genome sequence of the marine planctomycete Pirellula sp. strain 1.</title>
        <authorList>
            <person name="Gloeckner F.O."/>
            <person name="Kube M."/>
            <person name="Bauer M."/>
            <person name="Teeling H."/>
            <person name="Lombardot T."/>
            <person name="Ludwig W."/>
            <person name="Gade D."/>
            <person name="Beck A."/>
            <person name="Borzym K."/>
            <person name="Heitmann K."/>
            <person name="Rabus R."/>
            <person name="Schlesner H."/>
            <person name="Amann R."/>
            <person name="Reinhardt R."/>
        </authorList>
    </citation>
    <scope>NUCLEOTIDE SEQUENCE [LARGE SCALE GENOMIC DNA]</scope>
    <source>
        <strain>DSM 10527 / NCIMB 13988 / SH1</strain>
    </source>
</reference>
<feature type="chain" id="PRO_0000123056" description="dTTP/UTP pyrophosphatase">
    <location>
        <begin position="1"/>
        <end position="227"/>
    </location>
</feature>
<feature type="region of interest" description="Disordered" evidence="2">
    <location>
        <begin position="1"/>
        <end position="21"/>
    </location>
</feature>
<feature type="active site" description="Proton acceptor" evidence="1">
    <location>
        <position position="87"/>
    </location>
</feature>
<feature type="site" description="Important for substrate specificity" evidence="1">
    <location>
        <position position="28"/>
    </location>
</feature>
<feature type="site" description="Important for substrate specificity" evidence="1">
    <location>
        <position position="88"/>
    </location>
</feature>
<feature type="site" description="Important for substrate specificity" evidence="1">
    <location>
        <position position="172"/>
    </location>
</feature>
<name>NTPPA_RHOBA</name>
<sequence length="227" mass="24707">MNDLPRAELPGSGSPNPESLILASGSPRRAQLLSAAGYEFSVQPASDSAECGICSRETAPEMVARLAYRKAADVVARIDDGLVLAADTVASCVGNILGKPHNRDHAEEMLRLLSGRNHDVFTGVCLWSRRDEKFVVDVVRTRLQMSDLTDQQLTEHLDSLRWDGKAGAFGYQDGNDWLKVIGNDSESNVVGLPMERLAELLENFEQNAEKITTPTIDSIESSDSSCS</sequence>
<organism>
    <name type="scientific">Rhodopirellula baltica (strain DSM 10527 / NCIMB 13988 / SH1)</name>
    <dbReference type="NCBI Taxonomy" id="243090"/>
    <lineage>
        <taxon>Bacteria</taxon>
        <taxon>Pseudomonadati</taxon>
        <taxon>Planctomycetota</taxon>
        <taxon>Planctomycetia</taxon>
        <taxon>Pirellulales</taxon>
        <taxon>Pirellulaceae</taxon>
        <taxon>Rhodopirellula</taxon>
    </lineage>
</organism>
<comment type="function">
    <text evidence="1">Nucleoside triphosphate pyrophosphatase that hydrolyzes dTTP and UTP. May have a dual role in cell division arrest and in preventing the incorporation of modified nucleotides into cellular nucleic acids.</text>
</comment>
<comment type="catalytic activity">
    <reaction evidence="1">
        <text>dTTP + H2O = dTMP + diphosphate + H(+)</text>
        <dbReference type="Rhea" id="RHEA:28534"/>
        <dbReference type="ChEBI" id="CHEBI:15377"/>
        <dbReference type="ChEBI" id="CHEBI:15378"/>
        <dbReference type="ChEBI" id="CHEBI:33019"/>
        <dbReference type="ChEBI" id="CHEBI:37568"/>
        <dbReference type="ChEBI" id="CHEBI:63528"/>
        <dbReference type="EC" id="3.6.1.9"/>
    </reaction>
</comment>
<comment type="catalytic activity">
    <reaction evidence="1">
        <text>UTP + H2O = UMP + diphosphate + H(+)</text>
        <dbReference type="Rhea" id="RHEA:29395"/>
        <dbReference type="ChEBI" id="CHEBI:15377"/>
        <dbReference type="ChEBI" id="CHEBI:15378"/>
        <dbReference type="ChEBI" id="CHEBI:33019"/>
        <dbReference type="ChEBI" id="CHEBI:46398"/>
        <dbReference type="ChEBI" id="CHEBI:57865"/>
        <dbReference type="EC" id="3.6.1.9"/>
    </reaction>
</comment>
<comment type="cofactor">
    <cofactor evidence="1">
        <name>a divalent metal cation</name>
        <dbReference type="ChEBI" id="CHEBI:60240"/>
    </cofactor>
</comment>
<comment type="subcellular location">
    <subcellularLocation>
        <location evidence="1">Cytoplasm</location>
    </subcellularLocation>
</comment>
<comment type="similarity">
    <text evidence="1">Belongs to the Maf family. YhdE subfamily.</text>
</comment>
<comment type="sequence caution" evidence="3">
    <conflict type="erroneous initiation">
        <sequence resource="EMBL-CDS" id="CAD72224"/>
    </conflict>
</comment>
<gene>
    <name type="ordered locus">RB1703</name>
</gene>